<keyword id="KW-0963">Cytoplasm</keyword>
<keyword id="KW-0324">Glycolysis</keyword>
<keyword id="KW-0456">Lyase</keyword>
<keyword id="KW-0460">Magnesium</keyword>
<keyword id="KW-0479">Metal-binding</keyword>
<keyword id="KW-0964">Secreted</keyword>
<reference key="1">
    <citation type="submission" date="2008-04" db="EMBL/GenBank/DDBJ databases">
        <title>Complete sequence of Yersinia pseudotuberculosis PB1/+.</title>
        <authorList>
            <person name="Copeland A."/>
            <person name="Lucas S."/>
            <person name="Lapidus A."/>
            <person name="Glavina del Rio T."/>
            <person name="Dalin E."/>
            <person name="Tice H."/>
            <person name="Bruce D."/>
            <person name="Goodwin L."/>
            <person name="Pitluck S."/>
            <person name="Munk A.C."/>
            <person name="Brettin T."/>
            <person name="Detter J.C."/>
            <person name="Han C."/>
            <person name="Tapia R."/>
            <person name="Schmutz J."/>
            <person name="Larimer F."/>
            <person name="Land M."/>
            <person name="Hauser L."/>
            <person name="Challacombe J.F."/>
            <person name="Green L."/>
            <person name="Lindler L.E."/>
            <person name="Nikolich M.P."/>
            <person name="Richardson P."/>
        </authorList>
    </citation>
    <scope>NUCLEOTIDE SEQUENCE [LARGE SCALE GENOMIC DNA]</scope>
    <source>
        <strain>PB1/+</strain>
    </source>
</reference>
<feature type="chain" id="PRO_1000115937" description="Enolase">
    <location>
        <begin position="1"/>
        <end position="431"/>
    </location>
</feature>
<feature type="active site" description="Proton donor" evidence="1">
    <location>
        <position position="209"/>
    </location>
</feature>
<feature type="active site" description="Proton acceptor" evidence="1">
    <location>
        <position position="342"/>
    </location>
</feature>
<feature type="binding site" evidence="1">
    <location>
        <position position="167"/>
    </location>
    <ligand>
        <name>(2R)-2-phosphoglycerate</name>
        <dbReference type="ChEBI" id="CHEBI:58289"/>
    </ligand>
</feature>
<feature type="binding site" evidence="1">
    <location>
        <position position="246"/>
    </location>
    <ligand>
        <name>Mg(2+)</name>
        <dbReference type="ChEBI" id="CHEBI:18420"/>
    </ligand>
</feature>
<feature type="binding site" evidence="1">
    <location>
        <position position="290"/>
    </location>
    <ligand>
        <name>Mg(2+)</name>
        <dbReference type="ChEBI" id="CHEBI:18420"/>
    </ligand>
</feature>
<feature type="binding site" evidence="1">
    <location>
        <position position="317"/>
    </location>
    <ligand>
        <name>Mg(2+)</name>
        <dbReference type="ChEBI" id="CHEBI:18420"/>
    </ligand>
</feature>
<feature type="binding site" evidence="1">
    <location>
        <position position="342"/>
    </location>
    <ligand>
        <name>(2R)-2-phosphoglycerate</name>
        <dbReference type="ChEBI" id="CHEBI:58289"/>
    </ligand>
</feature>
<feature type="binding site" evidence="1">
    <location>
        <position position="371"/>
    </location>
    <ligand>
        <name>(2R)-2-phosphoglycerate</name>
        <dbReference type="ChEBI" id="CHEBI:58289"/>
    </ligand>
</feature>
<feature type="binding site" evidence="1">
    <location>
        <position position="372"/>
    </location>
    <ligand>
        <name>(2R)-2-phosphoglycerate</name>
        <dbReference type="ChEBI" id="CHEBI:58289"/>
    </ligand>
</feature>
<feature type="binding site" evidence="1">
    <location>
        <position position="393"/>
    </location>
    <ligand>
        <name>(2R)-2-phosphoglycerate</name>
        <dbReference type="ChEBI" id="CHEBI:58289"/>
    </ligand>
</feature>
<proteinExistence type="inferred from homology"/>
<name>ENO_YERPB</name>
<comment type="function">
    <text evidence="1">Catalyzes the reversible conversion of 2-phosphoglycerate (2-PG) into phosphoenolpyruvate (PEP). It is essential for the degradation of carbohydrates via glycolysis.</text>
</comment>
<comment type="catalytic activity">
    <reaction evidence="1">
        <text>(2R)-2-phosphoglycerate = phosphoenolpyruvate + H2O</text>
        <dbReference type="Rhea" id="RHEA:10164"/>
        <dbReference type="ChEBI" id="CHEBI:15377"/>
        <dbReference type="ChEBI" id="CHEBI:58289"/>
        <dbReference type="ChEBI" id="CHEBI:58702"/>
        <dbReference type="EC" id="4.2.1.11"/>
    </reaction>
</comment>
<comment type="cofactor">
    <cofactor evidence="1">
        <name>Mg(2+)</name>
        <dbReference type="ChEBI" id="CHEBI:18420"/>
    </cofactor>
    <text evidence="1">Binds a second Mg(2+) ion via substrate during catalysis.</text>
</comment>
<comment type="pathway">
    <text evidence="1">Carbohydrate degradation; glycolysis; pyruvate from D-glyceraldehyde 3-phosphate: step 4/5.</text>
</comment>
<comment type="subunit">
    <text evidence="1">Component of the RNA degradosome, a multiprotein complex involved in RNA processing and mRNA degradation.</text>
</comment>
<comment type="subcellular location">
    <subcellularLocation>
        <location evidence="1">Cytoplasm</location>
    </subcellularLocation>
    <subcellularLocation>
        <location evidence="1">Secreted</location>
    </subcellularLocation>
    <subcellularLocation>
        <location evidence="1">Cell surface</location>
    </subcellularLocation>
    <text evidence="1">Fractions of enolase are present in both the cytoplasm and on the cell surface.</text>
</comment>
<comment type="similarity">
    <text evidence="1">Belongs to the enolase family.</text>
</comment>
<dbReference type="EC" id="4.2.1.11" evidence="1"/>
<dbReference type="EMBL" id="CP001048">
    <property type="protein sequence ID" value="ACC87772.1"/>
    <property type="molecule type" value="Genomic_DNA"/>
</dbReference>
<dbReference type="RefSeq" id="WP_011191770.1">
    <property type="nucleotide sequence ID" value="NZ_CP009780.1"/>
</dbReference>
<dbReference type="SMR" id="B2K561"/>
<dbReference type="GeneID" id="49787239"/>
<dbReference type="KEGG" id="ypb:YPTS_0788"/>
<dbReference type="PATRIC" id="fig|502801.10.peg.120"/>
<dbReference type="UniPathway" id="UPA00109">
    <property type="reaction ID" value="UER00187"/>
</dbReference>
<dbReference type="GO" id="GO:0009986">
    <property type="term" value="C:cell surface"/>
    <property type="evidence" value="ECO:0007669"/>
    <property type="project" value="UniProtKB-SubCell"/>
</dbReference>
<dbReference type="GO" id="GO:0005576">
    <property type="term" value="C:extracellular region"/>
    <property type="evidence" value="ECO:0007669"/>
    <property type="project" value="UniProtKB-SubCell"/>
</dbReference>
<dbReference type="GO" id="GO:0000015">
    <property type="term" value="C:phosphopyruvate hydratase complex"/>
    <property type="evidence" value="ECO:0007669"/>
    <property type="project" value="InterPro"/>
</dbReference>
<dbReference type="GO" id="GO:0000287">
    <property type="term" value="F:magnesium ion binding"/>
    <property type="evidence" value="ECO:0007669"/>
    <property type="project" value="UniProtKB-UniRule"/>
</dbReference>
<dbReference type="GO" id="GO:0004634">
    <property type="term" value="F:phosphopyruvate hydratase activity"/>
    <property type="evidence" value="ECO:0007669"/>
    <property type="project" value="UniProtKB-UniRule"/>
</dbReference>
<dbReference type="GO" id="GO:0006096">
    <property type="term" value="P:glycolytic process"/>
    <property type="evidence" value="ECO:0007669"/>
    <property type="project" value="UniProtKB-UniRule"/>
</dbReference>
<dbReference type="CDD" id="cd03313">
    <property type="entry name" value="enolase"/>
    <property type="match status" value="1"/>
</dbReference>
<dbReference type="FunFam" id="3.20.20.120:FF:000001">
    <property type="entry name" value="Enolase"/>
    <property type="match status" value="1"/>
</dbReference>
<dbReference type="FunFam" id="3.30.390.10:FF:000001">
    <property type="entry name" value="Enolase"/>
    <property type="match status" value="1"/>
</dbReference>
<dbReference type="Gene3D" id="3.20.20.120">
    <property type="entry name" value="Enolase-like C-terminal domain"/>
    <property type="match status" value="1"/>
</dbReference>
<dbReference type="Gene3D" id="3.30.390.10">
    <property type="entry name" value="Enolase-like, N-terminal domain"/>
    <property type="match status" value="1"/>
</dbReference>
<dbReference type="HAMAP" id="MF_00318">
    <property type="entry name" value="Enolase"/>
    <property type="match status" value="1"/>
</dbReference>
<dbReference type="InterPro" id="IPR000941">
    <property type="entry name" value="Enolase"/>
</dbReference>
<dbReference type="InterPro" id="IPR036849">
    <property type="entry name" value="Enolase-like_C_sf"/>
</dbReference>
<dbReference type="InterPro" id="IPR029017">
    <property type="entry name" value="Enolase-like_N"/>
</dbReference>
<dbReference type="InterPro" id="IPR020810">
    <property type="entry name" value="Enolase_C"/>
</dbReference>
<dbReference type="InterPro" id="IPR020809">
    <property type="entry name" value="Enolase_CS"/>
</dbReference>
<dbReference type="InterPro" id="IPR020811">
    <property type="entry name" value="Enolase_N"/>
</dbReference>
<dbReference type="NCBIfam" id="TIGR01060">
    <property type="entry name" value="eno"/>
    <property type="match status" value="1"/>
</dbReference>
<dbReference type="PANTHER" id="PTHR11902">
    <property type="entry name" value="ENOLASE"/>
    <property type="match status" value="1"/>
</dbReference>
<dbReference type="PANTHER" id="PTHR11902:SF1">
    <property type="entry name" value="ENOLASE"/>
    <property type="match status" value="1"/>
</dbReference>
<dbReference type="Pfam" id="PF00113">
    <property type="entry name" value="Enolase_C"/>
    <property type="match status" value="1"/>
</dbReference>
<dbReference type="Pfam" id="PF03952">
    <property type="entry name" value="Enolase_N"/>
    <property type="match status" value="1"/>
</dbReference>
<dbReference type="PIRSF" id="PIRSF001400">
    <property type="entry name" value="Enolase"/>
    <property type="match status" value="1"/>
</dbReference>
<dbReference type="PRINTS" id="PR00148">
    <property type="entry name" value="ENOLASE"/>
</dbReference>
<dbReference type="SFLD" id="SFLDF00002">
    <property type="entry name" value="enolase"/>
    <property type="match status" value="1"/>
</dbReference>
<dbReference type="SFLD" id="SFLDG00178">
    <property type="entry name" value="enolase"/>
    <property type="match status" value="1"/>
</dbReference>
<dbReference type="SMART" id="SM01192">
    <property type="entry name" value="Enolase_C"/>
    <property type="match status" value="1"/>
</dbReference>
<dbReference type="SMART" id="SM01193">
    <property type="entry name" value="Enolase_N"/>
    <property type="match status" value="1"/>
</dbReference>
<dbReference type="SUPFAM" id="SSF51604">
    <property type="entry name" value="Enolase C-terminal domain-like"/>
    <property type="match status" value="1"/>
</dbReference>
<dbReference type="SUPFAM" id="SSF54826">
    <property type="entry name" value="Enolase N-terminal domain-like"/>
    <property type="match status" value="1"/>
</dbReference>
<dbReference type="PROSITE" id="PS00164">
    <property type="entry name" value="ENOLASE"/>
    <property type="match status" value="1"/>
</dbReference>
<sequence>MSKIVKVIGREIIDSRGNPTVEAEVHLEGGFVGLAAAPSGASTGSREALELRDGDKSRFLGKGVLKAVAAVNGPIAQAVIGKDAKDQANIDKIMIDLDGTENKSQFGANAILAVSLAAAKAAAASKGMPLYEHIAELNGTPGKFSMPLPMMNIINGGEHADNNVDIQEFMIQPVGAKTLKEAVRIGSEVFHHLAKVLKAKGLNTAVGDEGGYAPNLGSNAEALAVIAEAVKAAGYELGKDVTLAMDCAASEFYKDGKYVLAGEGNKAFTSEEFTHFLEDLTKQYPIVSIEDGLDESDWAGFKYQTEVLGDKIQLVGDDLFVTNTKILKEGIEKGVANSILIKFNQIGSLTETLAAIKMAKDAGYTAVISHRSGETEDATIADLAVGTAAGQIKTGSMSRSDRVAKYNQLIRIEEALGDRAPFNGLKEVKGQ</sequence>
<organism>
    <name type="scientific">Yersinia pseudotuberculosis serotype IB (strain PB1/+)</name>
    <dbReference type="NCBI Taxonomy" id="502801"/>
    <lineage>
        <taxon>Bacteria</taxon>
        <taxon>Pseudomonadati</taxon>
        <taxon>Pseudomonadota</taxon>
        <taxon>Gammaproteobacteria</taxon>
        <taxon>Enterobacterales</taxon>
        <taxon>Yersiniaceae</taxon>
        <taxon>Yersinia</taxon>
    </lineage>
</organism>
<evidence type="ECO:0000255" key="1">
    <source>
        <dbReference type="HAMAP-Rule" id="MF_00318"/>
    </source>
</evidence>
<accession>B2K561</accession>
<protein>
    <recommendedName>
        <fullName evidence="1">Enolase</fullName>
        <ecNumber evidence="1">4.2.1.11</ecNumber>
    </recommendedName>
    <alternativeName>
        <fullName evidence="1">2-phospho-D-glycerate hydro-lyase</fullName>
    </alternativeName>
    <alternativeName>
        <fullName evidence="1">2-phosphoglycerate dehydratase</fullName>
    </alternativeName>
</protein>
<gene>
    <name evidence="1" type="primary">eno</name>
    <name type="ordered locus">YPTS_0788</name>
</gene>